<accession>Q3MHG1</accession>
<name>SPTC1_BOVIN</name>
<dbReference type="EC" id="2.3.1.50" evidence="2"/>
<dbReference type="EMBL" id="BC105250">
    <property type="protein sequence ID" value="AAI05251.1"/>
    <property type="molecule type" value="mRNA"/>
</dbReference>
<dbReference type="RefSeq" id="NP_001029921.1">
    <property type="nucleotide sequence ID" value="NM_001034749.1"/>
</dbReference>
<dbReference type="SMR" id="Q3MHG1"/>
<dbReference type="FunCoup" id="Q3MHG1">
    <property type="interactions" value="4381"/>
</dbReference>
<dbReference type="STRING" id="9913.ENSBTAP00000002872"/>
<dbReference type="PaxDb" id="9913-ENSBTAP00000002872"/>
<dbReference type="Ensembl" id="ENSBTAT00000002872.6">
    <property type="protein sequence ID" value="ENSBTAP00000002872.5"/>
    <property type="gene ID" value="ENSBTAG00000002220.7"/>
</dbReference>
<dbReference type="GeneID" id="614165"/>
<dbReference type="KEGG" id="bta:614165"/>
<dbReference type="CTD" id="10558"/>
<dbReference type="VEuPathDB" id="HostDB:ENSBTAG00000002220"/>
<dbReference type="VGNC" id="VGNC:35256">
    <property type="gene designation" value="SPTLC1"/>
</dbReference>
<dbReference type="eggNOG" id="KOG1358">
    <property type="taxonomic scope" value="Eukaryota"/>
</dbReference>
<dbReference type="GeneTree" id="ENSGT00550000074872"/>
<dbReference type="HOGENOM" id="CLU_015846_0_1_1"/>
<dbReference type="InParanoid" id="Q3MHG1"/>
<dbReference type="OMA" id="LTKYGCG"/>
<dbReference type="OrthoDB" id="3168162at2759"/>
<dbReference type="TreeFam" id="TF314877"/>
<dbReference type="Reactome" id="R-BTA-1660661">
    <property type="pathway name" value="Sphingolipid de novo biosynthesis"/>
</dbReference>
<dbReference type="UniPathway" id="UPA00222"/>
<dbReference type="Proteomes" id="UP000009136">
    <property type="component" value="Chromosome 8"/>
</dbReference>
<dbReference type="Bgee" id="ENSBTAG00000002220">
    <property type="expression patterns" value="Expressed in parenchyma of mammary gland and 104 other cell types or tissues"/>
</dbReference>
<dbReference type="GO" id="GO:0005783">
    <property type="term" value="C:endoplasmic reticulum"/>
    <property type="evidence" value="ECO:0000318"/>
    <property type="project" value="GO_Central"/>
</dbReference>
<dbReference type="GO" id="GO:0005789">
    <property type="term" value="C:endoplasmic reticulum membrane"/>
    <property type="evidence" value="ECO:0007669"/>
    <property type="project" value="UniProtKB-SubCell"/>
</dbReference>
<dbReference type="GO" id="GO:0017059">
    <property type="term" value="C:serine palmitoyltransferase complex"/>
    <property type="evidence" value="ECO:0000250"/>
    <property type="project" value="UniProtKB"/>
</dbReference>
<dbReference type="GO" id="GO:0030170">
    <property type="term" value="F:pyridoxal phosphate binding"/>
    <property type="evidence" value="ECO:0007669"/>
    <property type="project" value="InterPro"/>
</dbReference>
<dbReference type="GO" id="GO:0004758">
    <property type="term" value="F:serine C-palmitoyltransferase activity"/>
    <property type="evidence" value="ECO:0000250"/>
    <property type="project" value="UniProtKB"/>
</dbReference>
<dbReference type="GO" id="GO:0046513">
    <property type="term" value="P:ceramide biosynthetic process"/>
    <property type="evidence" value="ECO:0000318"/>
    <property type="project" value="GO_Central"/>
</dbReference>
<dbReference type="GO" id="GO:1904649">
    <property type="term" value="P:regulation of fat cell apoptotic process"/>
    <property type="evidence" value="ECO:0000250"/>
    <property type="project" value="UniProtKB"/>
</dbReference>
<dbReference type="GO" id="GO:0006665">
    <property type="term" value="P:sphingolipid metabolic process"/>
    <property type="evidence" value="ECO:0000250"/>
    <property type="project" value="UniProtKB"/>
</dbReference>
<dbReference type="GO" id="GO:0046512">
    <property type="term" value="P:sphingosine biosynthetic process"/>
    <property type="evidence" value="ECO:0000318"/>
    <property type="project" value="GO_Central"/>
</dbReference>
<dbReference type="FunFam" id="3.40.640.10:FF:000049">
    <property type="entry name" value="serine palmitoyltransferase 1 isoform X1"/>
    <property type="match status" value="1"/>
</dbReference>
<dbReference type="Gene3D" id="3.90.1150.10">
    <property type="entry name" value="Aspartate Aminotransferase, domain 1"/>
    <property type="match status" value="1"/>
</dbReference>
<dbReference type="Gene3D" id="3.40.640.10">
    <property type="entry name" value="Type I PLP-dependent aspartate aminotransferase-like (Major domain)"/>
    <property type="match status" value="1"/>
</dbReference>
<dbReference type="InterPro" id="IPR004839">
    <property type="entry name" value="Aminotransferase_I/II_large"/>
</dbReference>
<dbReference type="InterPro" id="IPR050087">
    <property type="entry name" value="AON_synthase_class-II"/>
</dbReference>
<dbReference type="InterPro" id="IPR015424">
    <property type="entry name" value="PyrdxlP-dep_Trfase"/>
</dbReference>
<dbReference type="InterPro" id="IPR015421">
    <property type="entry name" value="PyrdxlP-dep_Trfase_major"/>
</dbReference>
<dbReference type="InterPro" id="IPR015422">
    <property type="entry name" value="PyrdxlP-dep_Trfase_small"/>
</dbReference>
<dbReference type="PANTHER" id="PTHR13693">
    <property type="entry name" value="CLASS II AMINOTRANSFERASE/8-AMINO-7-OXONONANOATE SYNTHASE"/>
    <property type="match status" value="1"/>
</dbReference>
<dbReference type="PANTHER" id="PTHR13693:SF2">
    <property type="entry name" value="SERINE PALMITOYLTRANSFERASE 1"/>
    <property type="match status" value="1"/>
</dbReference>
<dbReference type="Pfam" id="PF00155">
    <property type="entry name" value="Aminotran_1_2"/>
    <property type="match status" value="1"/>
</dbReference>
<dbReference type="SUPFAM" id="SSF53383">
    <property type="entry name" value="PLP-dependent transferases"/>
    <property type="match status" value="1"/>
</dbReference>
<reference key="1">
    <citation type="submission" date="2005-09" db="EMBL/GenBank/DDBJ databases">
        <authorList>
            <consortium name="NIH - Mammalian Gene Collection (MGC) project"/>
        </authorList>
    </citation>
    <scope>NUCLEOTIDE SEQUENCE [LARGE SCALE MRNA]</scope>
    <source>
        <strain>Hereford</strain>
        <tissue>Uterus</tissue>
    </source>
</reference>
<proteinExistence type="evidence at transcript level"/>
<feature type="chain" id="PRO_0000283042" description="Serine palmitoyltransferase 1">
    <location>
        <begin position="1"/>
        <end position="473"/>
    </location>
</feature>
<feature type="topological domain" description="Lumenal" evidence="4">
    <location>
        <begin position="1"/>
        <end position="15"/>
    </location>
</feature>
<feature type="transmembrane region" description="Helical" evidence="4">
    <location>
        <begin position="16"/>
        <end position="36"/>
    </location>
</feature>
<feature type="topological domain" description="Cytoplasmic" evidence="4">
    <location>
        <begin position="37"/>
        <end position="473"/>
    </location>
</feature>
<feature type="region of interest" description="Interaction with SPTLC2" evidence="2">
    <location>
        <begin position="1"/>
        <end position="66"/>
    </location>
</feature>
<feature type="modified residue" description="Phosphotyrosine; by ABL" evidence="2">
    <location>
        <position position="164"/>
    </location>
</feature>
<gene>
    <name type="primary">SPTLC1</name>
</gene>
<keyword id="KW-0012">Acyltransferase</keyword>
<keyword id="KW-0256">Endoplasmic reticulum</keyword>
<keyword id="KW-0443">Lipid metabolism</keyword>
<keyword id="KW-0472">Membrane</keyword>
<keyword id="KW-0597">Phosphoprotein</keyword>
<keyword id="KW-0663">Pyridoxal phosphate</keyword>
<keyword id="KW-1185">Reference proteome</keyword>
<keyword id="KW-0746">Sphingolipid metabolism</keyword>
<keyword id="KW-0808">Transferase</keyword>
<keyword id="KW-0812">Transmembrane</keyword>
<keyword id="KW-1133">Transmembrane helix</keyword>
<evidence type="ECO:0000250" key="1"/>
<evidence type="ECO:0000250" key="2">
    <source>
        <dbReference type="UniProtKB" id="O15269"/>
    </source>
</evidence>
<evidence type="ECO:0000250" key="3">
    <source>
        <dbReference type="UniProtKB" id="O35704"/>
    </source>
</evidence>
<evidence type="ECO:0000255" key="4"/>
<evidence type="ECO:0000305" key="5"/>
<organism>
    <name type="scientific">Bos taurus</name>
    <name type="common">Bovine</name>
    <dbReference type="NCBI Taxonomy" id="9913"/>
    <lineage>
        <taxon>Eukaryota</taxon>
        <taxon>Metazoa</taxon>
        <taxon>Chordata</taxon>
        <taxon>Craniata</taxon>
        <taxon>Vertebrata</taxon>
        <taxon>Euteleostomi</taxon>
        <taxon>Mammalia</taxon>
        <taxon>Eutheria</taxon>
        <taxon>Laurasiatheria</taxon>
        <taxon>Artiodactyla</taxon>
        <taxon>Ruminantia</taxon>
        <taxon>Pecora</taxon>
        <taxon>Bovidae</taxon>
        <taxon>Bovinae</taxon>
        <taxon>Bos</taxon>
    </lineage>
</organism>
<protein>
    <recommendedName>
        <fullName>Serine palmitoyltransferase 1</fullName>
        <ecNumber evidence="2">2.3.1.50</ecNumber>
    </recommendedName>
    <alternativeName>
        <fullName>Long chain base biosynthesis protein 1</fullName>
        <shortName>LCB 1</shortName>
    </alternativeName>
    <alternativeName>
        <fullName>Serine-palmitoyl-CoA transferase 1</fullName>
        <shortName>SPT 1</shortName>
        <shortName>SPT1</shortName>
    </alternativeName>
</protein>
<comment type="function">
    <text evidence="2 3">Component of the serine palmitoyltransferase multisubunit enzyme (SPT) that catalyzes the initial and rate-limiting step in sphingolipid biosynthesis by condensing L-serine and activated acyl-CoA (most commonly palmitoyl-CoA) to form long-chain bases. The SPT complex is also composed of SPTLC2 or SPTLC3 and SPTSSA or SPTSSB. Within this complex, the heterodimer with SPTLC2 or SPTLC3 forms the catalytic core. The composition of the serine palmitoyltransferase (SPT) complex determines the substrate preference. The SPTLC1-SPTLC2-SPTSSA complex shows a strong preference for C16-CoA substrate, while the SPTLC1-SPTLC3-SPTSSA isozyme uses both C14-CoA and C16-CoA as substrates, with a slight preference for C14-CoA. The SPTLC1-SPTLC2-SPTSSB complex shows a strong preference for C18-CoA substrate, while the SPTLC1-SPTLC3-SPTSSB isozyme displays an ability to use a broader range of acyl-CoAs, without apparent preference (By similarity). Required for adipocyte cell viability and metabolic homeostasis (By similarity).</text>
</comment>
<comment type="catalytic activity">
    <reaction evidence="2">
        <text>L-serine + hexadecanoyl-CoA + H(+) = 3-oxosphinganine + CO2 + CoA</text>
        <dbReference type="Rhea" id="RHEA:14761"/>
        <dbReference type="ChEBI" id="CHEBI:15378"/>
        <dbReference type="ChEBI" id="CHEBI:16526"/>
        <dbReference type="ChEBI" id="CHEBI:33384"/>
        <dbReference type="ChEBI" id="CHEBI:57287"/>
        <dbReference type="ChEBI" id="CHEBI:57379"/>
        <dbReference type="ChEBI" id="CHEBI:58299"/>
        <dbReference type="EC" id="2.3.1.50"/>
    </reaction>
    <physiologicalReaction direction="left-to-right" evidence="2">
        <dbReference type="Rhea" id="RHEA:14762"/>
    </physiologicalReaction>
</comment>
<comment type="catalytic activity">
    <reaction evidence="2">
        <text>octadecanoyl-CoA + L-serine + H(+) = 3-oxoeicosasphinganine + CO2 + CoA</text>
        <dbReference type="Rhea" id="RHEA:33683"/>
        <dbReference type="ChEBI" id="CHEBI:15378"/>
        <dbReference type="ChEBI" id="CHEBI:16526"/>
        <dbReference type="ChEBI" id="CHEBI:33384"/>
        <dbReference type="ChEBI" id="CHEBI:57287"/>
        <dbReference type="ChEBI" id="CHEBI:57394"/>
        <dbReference type="ChEBI" id="CHEBI:65073"/>
    </reaction>
    <physiologicalReaction direction="left-to-right" evidence="2">
        <dbReference type="Rhea" id="RHEA:33684"/>
    </physiologicalReaction>
</comment>
<comment type="catalytic activity">
    <reaction evidence="2">
        <text>tetradecanoyl-CoA + L-serine + H(+) = 3-oxohexadecasphinganine + CO2 + CoA</text>
        <dbReference type="Rhea" id="RHEA:35675"/>
        <dbReference type="ChEBI" id="CHEBI:15378"/>
        <dbReference type="ChEBI" id="CHEBI:16526"/>
        <dbReference type="ChEBI" id="CHEBI:33384"/>
        <dbReference type="ChEBI" id="CHEBI:57287"/>
        <dbReference type="ChEBI" id="CHEBI:57385"/>
        <dbReference type="ChEBI" id="CHEBI:71007"/>
    </reaction>
    <physiologicalReaction direction="left-to-right" evidence="2">
        <dbReference type="Rhea" id="RHEA:35676"/>
    </physiologicalReaction>
</comment>
<comment type="catalytic activity">
    <reaction evidence="2">
        <text>dodecanoyl-CoA + L-serine + H(+) = 3-oxotetradecasphinganine + CO2 + CoA</text>
        <dbReference type="Rhea" id="RHEA:35679"/>
        <dbReference type="ChEBI" id="CHEBI:15378"/>
        <dbReference type="ChEBI" id="CHEBI:16526"/>
        <dbReference type="ChEBI" id="CHEBI:33384"/>
        <dbReference type="ChEBI" id="CHEBI:57287"/>
        <dbReference type="ChEBI" id="CHEBI:57375"/>
        <dbReference type="ChEBI" id="CHEBI:71008"/>
    </reaction>
    <physiologicalReaction direction="left-to-right" evidence="2">
        <dbReference type="Rhea" id="RHEA:35680"/>
    </physiologicalReaction>
</comment>
<comment type="cofactor">
    <cofactor evidence="1">
        <name>pyridoxal 5'-phosphate</name>
        <dbReference type="ChEBI" id="CHEBI:597326"/>
    </cofactor>
</comment>
<comment type="activity regulation">
    <text evidence="2 5">SPT complex catalytic activity is negatively regulated by ORMDL proteins, including ORMDL3, in the presence of ceramides (By similarity). This mechanism allows to maintain ceramide levels at sufficient concentrations for the production of complex sphingolipids, but which prevents the accumulation of ceramides to levels that trigger apoptosis (Probable).</text>
</comment>
<comment type="pathway">
    <text>Lipid metabolism; sphingolipid metabolism.</text>
</comment>
<comment type="subunit">
    <text evidence="2 3">Component of the serine palmitoyltransferase (SPT) complex, which is also composed of SPTLC2 or SPTLC3 and SPTSSA or SPTSSB (By similarity). The heterodimer with SPTLC2 or SPTLC3 forms the catalytic core of the enzyme, while SPTSSA or SPTSSB subunits determine substrate specificity (By similarity). SPT also interacts with ORMDL proteins, especially ORMDL3, which negatively regulate SPT activity in the presence of ceramides (By similarity). Forms dimers of heterodimers with SPTLC2 (By similarity). Interacts with RTN4 (By similarity).</text>
</comment>
<comment type="subcellular location">
    <subcellularLocation>
        <location evidence="3">Endoplasmic reticulum membrane</location>
        <topology evidence="3">Single-pass membrane protein</topology>
    </subcellularLocation>
</comment>
<comment type="domain">
    <text evidence="2">The transmembrane domain is involved in the interaction with ORMDL3.</text>
</comment>
<comment type="PTM">
    <text evidence="2">Phosphorylation at Tyr-164 inhibits activity and promotes cell survival.</text>
</comment>
<comment type="similarity">
    <text evidence="5">Belongs to the class-II pyridoxal-phosphate-dependent aminotransferase family.</text>
</comment>
<sequence>MATVAEQWVLVEMVQALYEAPAYHLILEGILILWIIRLLFSKTYKLQERSDLTLKEKEELIEEWQPEPLVPPVSKDHPALNYNIVSGPPSHNIVVNGKECINFASFNFLGLLDNPRLKAAALASLKKYGVGTCGPRGFYGTFDVHLDLEDRLAKFMKTEEAIIYSYGFATIASAIPAYSKRGDIVFVDKAACFAIQKGLQASRSDIKVFNHNDMDDLERLLKEQEIEDQKNPRKARVTRRFIIVEGLYMNTGTVCPLPELVKLKYKYKARIFLEESLSFGVLGEHGRGVTEHFGISIDDIDLISANMENSLASIGGFCCGRSFVIDHQRLSGQGYCFSASLPPLLAAAAIEALNIMEENPGIFAVLKEKCKRIHKALQGIPGLKVVGESISPALHLQLEETTGCRERDVKLLQEIVTQCMDRGIALTQARYLEKEEKYLPPPSIRVVVTVEQTEEDLEKAASTISEVAQTVLL</sequence>